<reference key="1">
    <citation type="journal article" date="1994" name="FEBS Lett.">
        <title>Molecular cloning of the canine angiotensin II receptor. An AT1-like receptor with reduced affinity for DuP753.</title>
        <authorList>
            <person name="Burns L."/>
            <person name="Clark K.L."/>
            <person name="Bradley J."/>
            <person name="Robertson M.J."/>
            <person name="Clark A.J."/>
        </authorList>
    </citation>
    <scope>NUCLEOTIDE SEQUENCE [MRNA]</scope>
    <scope>FUNCTION</scope>
    <scope>TISSUE SPECIFICITY</scope>
    <source>
        <tissue>Liver</tissue>
    </source>
</reference>
<evidence type="ECO:0000250" key="1">
    <source>
        <dbReference type="UniProtKB" id="P25095"/>
    </source>
</evidence>
<evidence type="ECO:0000250" key="2">
    <source>
        <dbReference type="UniProtKB" id="P30556"/>
    </source>
</evidence>
<evidence type="ECO:0000255" key="3"/>
<evidence type="ECO:0000255" key="4">
    <source>
        <dbReference type="PROSITE-ProRule" id="PRU00521"/>
    </source>
</evidence>
<evidence type="ECO:0000256" key="5">
    <source>
        <dbReference type="SAM" id="MobiDB-lite"/>
    </source>
</evidence>
<evidence type="ECO:0000269" key="6">
    <source>
    </source>
</evidence>
<evidence type="ECO:0000303" key="7">
    <source>
    </source>
</evidence>
<feature type="chain" id="PRO_0000069151" description="Type-1 angiotensin II receptor">
    <location>
        <begin position="1"/>
        <end position="359"/>
    </location>
</feature>
<feature type="topological domain" description="Extracellular" evidence="2">
    <location>
        <begin position="1"/>
        <end position="25"/>
    </location>
</feature>
<feature type="transmembrane region" description="Helical; Name=1" evidence="2">
    <location>
        <begin position="26"/>
        <end position="55"/>
    </location>
</feature>
<feature type="topological domain" description="Cytoplasmic" evidence="2">
    <location>
        <begin position="56"/>
        <end position="61"/>
    </location>
</feature>
<feature type="transmembrane region" description="Helical; Name=2" evidence="2">
    <location>
        <begin position="62"/>
        <end position="89"/>
    </location>
</feature>
<feature type="topological domain" description="Extracellular" evidence="2">
    <location>
        <begin position="90"/>
        <end position="98"/>
    </location>
</feature>
<feature type="transmembrane region" description="Helical; Name=3" evidence="2">
    <location>
        <begin position="99"/>
        <end position="125"/>
    </location>
</feature>
<feature type="topological domain" description="Cytoplasmic" evidence="2">
    <location>
        <begin position="126"/>
        <end position="141"/>
    </location>
</feature>
<feature type="transmembrane region" description="Helical; Name=4" evidence="2">
    <location>
        <begin position="142"/>
        <end position="165"/>
    </location>
</feature>
<feature type="topological domain" description="Extracellular" evidence="2">
    <location>
        <begin position="166"/>
        <end position="190"/>
    </location>
</feature>
<feature type="transmembrane region" description="Helical; Name=5" evidence="2">
    <location>
        <begin position="191"/>
        <end position="216"/>
    </location>
</feature>
<feature type="topological domain" description="Cytoplasmic" evidence="2">
    <location>
        <begin position="217"/>
        <end position="239"/>
    </location>
</feature>
<feature type="transmembrane region" description="Helical; Name=6" evidence="2">
    <location>
        <begin position="240"/>
        <end position="268"/>
    </location>
</feature>
<feature type="topological domain" description="Extracellular" evidence="2">
    <location>
        <begin position="269"/>
        <end position="278"/>
    </location>
</feature>
<feature type="transmembrane region" description="Helical; Name=7" evidence="2">
    <location>
        <begin position="279"/>
        <end position="304"/>
    </location>
</feature>
<feature type="topological domain" description="Cytoplasmic" evidence="2">
    <location>
        <begin position="305"/>
        <end position="359"/>
    </location>
</feature>
<feature type="region of interest" description="Disordered" evidence="5">
    <location>
        <begin position="335"/>
        <end position="359"/>
    </location>
</feature>
<feature type="compositionally biased region" description="Polar residues" evidence="5">
    <location>
        <begin position="335"/>
        <end position="352"/>
    </location>
</feature>
<feature type="binding site" evidence="2">
    <location>
        <position position="15"/>
    </location>
    <ligand>
        <name>angiotensin II</name>
        <dbReference type="ChEBI" id="CHEBI:58506"/>
    </ligand>
</feature>
<feature type="binding site" evidence="2">
    <location>
        <position position="17"/>
    </location>
    <ligand>
        <name>angiotensin II</name>
        <dbReference type="ChEBI" id="CHEBI:58506"/>
    </ligand>
</feature>
<feature type="binding site" evidence="2">
    <location>
        <position position="167"/>
    </location>
    <ligand>
        <name>angiotensin II</name>
        <dbReference type="ChEBI" id="CHEBI:58506"/>
    </ligand>
</feature>
<feature type="binding site" evidence="2">
    <location>
        <position position="182"/>
    </location>
    <ligand>
        <name>angiotensin II</name>
        <dbReference type="ChEBI" id="CHEBI:58506"/>
    </ligand>
</feature>
<feature type="binding site" evidence="2">
    <location>
        <position position="183"/>
    </location>
    <ligand>
        <name>angiotensin II</name>
        <dbReference type="ChEBI" id="CHEBI:58506"/>
    </ligand>
</feature>
<feature type="binding site" evidence="2">
    <location>
        <position position="184"/>
    </location>
    <ligand>
        <name>angiotensin II</name>
        <dbReference type="ChEBI" id="CHEBI:58506"/>
    </ligand>
</feature>
<feature type="binding site" evidence="2">
    <location>
        <position position="199"/>
    </location>
    <ligand>
        <name>angiotensin II</name>
        <dbReference type="ChEBI" id="CHEBI:58506"/>
    </ligand>
</feature>
<feature type="lipid moiety-binding region" description="S-palmitoyl cysteine" evidence="3">
    <location>
        <position position="355"/>
    </location>
</feature>
<feature type="glycosylation site" description="N-linked (GlcNAc...) asparagine" evidence="3">
    <location>
        <position position="4"/>
    </location>
</feature>
<feature type="glycosylation site" description="N-linked (GlcNAc...) asparagine" evidence="3">
    <location>
        <position position="176"/>
    </location>
</feature>
<feature type="glycosylation site" description="N-linked (GlcNAc...) asparagine" evidence="3">
    <location>
        <position position="188"/>
    </location>
</feature>
<feature type="disulfide bond" evidence="2">
    <location>
        <begin position="18"/>
        <end position="274"/>
    </location>
</feature>
<feature type="disulfide bond" evidence="4">
    <location>
        <begin position="101"/>
        <end position="180"/>
    </location>
</feature>
<protein>
    <recommendedName>
        <fullName>Type-1 angiotensin II receptor</fullName>
    </recommendedName>
    <alternativeName>
        <fullName evidence="7">Angiotensin II type-1 receptor</fullName>
        <shortName evidence="7">AT1 receptor</shortName>
    </alternativeName>
</protein>
<gene>
    <name type="primary">AGTR1</name>
</gene>
<sequence length="359" mass="40902">MILNSSTEDGIKRIQDDCPKAGRHNYIFVMIPTLYSIIFVVGIFGNSLVVIVIYFYMKLKTVASVFLLNLALADLCFLLTLPLWAVYTAMEYRWPFGNYLCKIASASVSFNLYASVFLLTCLSIDRYVAIVHPMKSPVRRTMLMAKVTCIIIWLLAGLASLPTIIHRNVFFIENTNITVCAFHYESQNSTLPIGLGLTKNILGFLFPFLIILTSYTLIWKTLKRAYEIQKNKPRNDDIFKIIMAIVLFFFFSWVPHQIFTFLDVLIQLGIIHDCKIADIVDTAMPITICIAYFNNCLNPLFYGFLGKKFKKYFLQLLKYIPPKAKSHSSLSTKMSTLSYRPSDHGNASTKKSASCVEVE</sequence>
<organism>
    <name type="scientific">Canis lupus familiaris</name>
    <name type="common">Dog</name>
    <name type="synonym">Canis familiaris</name>
    <dbReference type="NCBI Taxonomy" id="9615"/>
    <lineage>
        <taxon>Eukaryota</taxon>
        <taxon>Metazoa</taxon>
        <taxon>Chordata</taxon>
        <taxon>Craniata</taxon>
        <taxon>Vertebrata</taxon>
        <taxon>Euteleostomi</taxon>
        <taxon>Mammalia</taxon>
        <taxon>Eutheria</taxon>
        <taxon>Laurasiatheria</taxon>
        <taxon>Carnivora</taxon>
        <taxon>Caniformia</taxon>
        <taxon>Canidae</taxon>
        <taxon>Canis</taxon>
    </lineage>
</organism>
<name>AGTR1_CANLF</name>
<keyword id="KW-1003">Cell membrane</keyword>
<keyword id="KW-1015">Disulfide bond</keyword>
<keyword id="KW-0297">G-protein coupled receptor</keyword>
<keyword id="KW-0325">Glycoprotein</keyword>
<keyword id="KW-0449">Lipoprotein</keyword>
<keyword id="KW-0472">Membrane</keyword>
<keyword id="KW-0564">Palmitate</keyword>
<keyword id="KW-0597">Phosphoprotein</keyword>
<keyword id="KW-0675">Receptor</keyword>
<keyword id="KW-1185">Reference proteome</keyword>
<keyword id="KW-0807">Transducer</keyword>
<keyword id="KW-0812">Transmembrane</keyword>
<keyword id="KW-1133">Transmembrane helix</keyword>
<comment type="function">
    <text evidence="2 6">Receptor for angiotensin II, a vasoconstricting peptide, which acts as a key regulator of blood pressure and sodium retention by the kidney (PubMed:8168620). The activated receptor in turn couples to G-alpha proteins G(q) (GNAQ, GNA11, GNA14 or GNA15) and thus activates phospholipase C and increases the cytosolic Ca(2+) concentrations, which in turn triggers cellular responses such as stimulation of protein kinase C (By similarity).</text>
</comment>
<comment type="subunit">
    <text evidence="1 2">Interacts with MAS1 (By similarity). Interacts with ARRB1 (By similarity). Interacts with FLNA (via filamin repeat 21); increases PKA-mediated phosphorylation of FLNA (By similarity).</text>
</comment>
<comment type="subcellular location">
    <subcellularLocation>
        <location evidence="2">Cell membrane</location>
        <topology evidence="2">Multi-pass membrane protein</topology>
    </subcellularLocation>
</comment>
<comment type="tissue specificity">
    <text evidence="6">Adrenal, liver, aorta, kidney, lung, testis and heart.</text>
</comment>
<comment type="PTM">
    <text evidence="2">C-terminal Ser or Thr residues may be phosphorylated.</text>
</comment>
<comment type="similarity">
    <text evidence="4">Belongs to the G-protein coupled receptor 1 family.</text>
</comment>
<dbReference type="PIR" id="S44425">
    <property type="entry name" value="S44425"/>
</dbReference>
<dbReference type="SMR" id="P43240"/>
<dbReference type="FunCoup" id="P43240">
    <property type="interactions" value="280"/>
</dbReference>
<dbReference type="STRING" id="9615.ENSCAFP00000040421"/>
<dbReference type="GlyCosmos" id="P43240">
    <property type="glycosylation" value="3 sites, No reported glycans"/>
</dbReference>
<dbReference type="PaxDb" id="9612-ENSCAFP00000040421"/>
<dbReference type="eggNOG" id="KOG3656">
    <property type="taxonomic scope" value="Eukaryota"/>
</dbReference>
<dbReference type="InParanoid" id="P43240"/>
<dbReference type="OrthoDB" id="8804420at2759"/>
<dbReference type="Proteomes" id="UP000002254">
    <property type="component" value="Unplaced"/>
</dbReference>
<dbReference type="Proteomes" id="UP000694429">
    <property type="component" value="Unplaced"/>
</dbReference>
<dbReference type="Proteomes" id="UP000694542">
    <property type="component" value="Unplaced"/>
</dbReference>
<dbReference type="Proteomes" id="UP000805418">
    <property type="component" value="Unplaced"/>
</dbReference>
<dbReference type="GO" id="GO:0005886">
    <property type="term" value="C:plasma membrane"/>
    <property type="evidence" value="ECO:0000318"/>
    <property type="project" value="GO_Central"/>
</dbReference>
<dbReference type="GO" id="GO:0001596">
    <property type="term" value="F:angiotensin type I receptor activity"/>
    <property type="evidence" value="ECO:0000314"/>
    <property type="project" value="UniProtKB"/>
</dbReference>
<dbReference type="GO" id="GO:0004945">
    <property type="term" value="F:angiotensin type II receptor activity"/>
    <property type="evidence" value="ECO:0007669"/>
    <property type="project" value="InterPro"/>
</dbReference>
<dbReference type="GO" id="GO:0007186">
    <property type="term" value="P:G protein-coupled receptor signaling pathway"/>
    <property type="evidence" value="ECO:0000318"/>
    <property type="project" value="GO_Central"/>
</dbReference>
<dbReference type="GO" id="GO:0006954">
    <property type="term" value="P:inflammatory response"/>
    <property type="evidence" value="ECO:0000318"/>
    <property type="project" value="GO_Central"/>
</dbReference>
<dbReference type="GO" id="GO:0002034">
    <property type="term" value="P:maintenance of blood vessel diameter homeostasis by renin-angiotensin"/>
    <property type="evidence" value="ECO:0000314"/>
    <property type="project" value="UniProtKB"/>
</dbReference>
<dbReference type="GO" id="GO:0007204">
    <property type="term" value="P:positive regulation of cytosolic calcium ion concentration"/>
    <property type="evidence" value="ECO:0000318"/>
    <property type="project" value="GO_Central"/>
</dbReference>
<dbReference type="GO" id="GO:0019229">
    <property type="term" value="P:regulation of vasoconstriction"/>
    <property type="evidence" value="ECO:0007669"/>
    <property type="project" value="InterPro"/>
</dbReference>
<dbReference type="CDD" id="cd15192">
    <property type="entry name" value="7tmA_AT1R"/>
    <property type="match status" value="1"/>
</dbReference>
<dbReference type="FunFam" id="1.20.1070.10:FF:000088">
    <property type="entry name" value="Angiotensin II receptor type 1"/>
    <property type="match status" value="1"/>
</dbReference>
<dbReference type="Gene3D" id="1.20.1070.10">
    <property type="entry name" value="Rhodopsin 7-helix transmembrane proteins"/>
    <property type="match status" value="1"/>
</dbReference>
<dbReference type="InterPro" id="IPR000190">
    <property type="entry name" value="ATII_AT1_rcpt"/>
</dbReference>
<dbReference type="InterPro" id="IPR000248">
    <property type="entry name" value="ATII_rcpt"/>
</dbReference>
<dbReference type="InterPro" id="IPR050119">
    <property type="entry name" value="CCR1-9-like"/>
</dbReference>
<dbReference type="InterPro" id="IPR000276">
    <property type="entry name" value="GPCR_Rhodpsn"/>
</dbReference>
<dbReference type="InterPro" id="IPR017452">
    <property type="entry name" value="GPCR_Rhodpsn_7TM"/>
</dbReference>
<dbReference type="PANTHER" id="PTHR10489">
    <property type="entry name" value="CELL ADHESION MOLECULE"/>
    <property type="match status" value="1"/>
</dbReference>
<dbReference type="PANTHER" id="PTHR10489:SF956">
    <property type="entry name" value="TYPE-1 ANGIOTENSIN II RECEPTOR A"/>
    <property type="match status" value="1"/>
</dbReference>
<dbReference type="Pfam" id="PF00001">
    <property type="entry name" value="7tm_1"/>
    <property type="match status" value="1"/>
</dbReference>
<dbReference type="PRINTS" id="PR00241">
    <property type="entry name" value="ANGIOTENSINR"/>
</dbReference>
<dbReference type="PRINTS" id="PR00635">
    <property type="entry name" value="ANGIOTENSN1R"/>
</dbReference>
<dbReference type="PRINTS" id="PR00237">
    <property type="entry name" value="GPCRRHODOPSN"/>
</dbReference>
<dbReference type="SMART" id="SM01381">
    <property type="entry name" value="7TM_GPCR_Srsx"/>
    <property type="match status" value="1"/>
</dbReference>
<dbReference type="SUPFAM" id="SSF81321">
    <property type="entry name" value="Family A G protein-coupled receptor-like"/>
    <property type="match status" value="1"/>
</dbReference>
<dbReference type="PROSITE" id="PS00237">
    <property type="entry name" value="G_PROTEIN_RECEP_F1_1"/>
    <property type="match status" value="1"/>
</dbReference>
<dbReference type="PROSITE" id="PS50262">
    <property type="entry name" value="G_PROTEIN_RECEP_F1_2"/>
    <property type="match status" value="1"/>
</dbReference>
<accession>P43240</accession>
<proteinExistence type="evidence at transcript level"/>